<name>CDH_SHIFL</name>
<evidence type="ECO:0000255" key="1">
    <source>
        <dbReference type="HAMAP-Rule" id="MF_00319"/>
    </source>
</evidence>
<proteinExistence type="inferred from homology"/>
<dbReference type="EC" id="3.6.1.26" evidence="1"/>
<dbReference type="EMBL" id="AE005674">
    <property type="protein sequence ID" value="AAN45430.2"/>
    <property type="molecule type" value="Genomic_DNA"/>
</dbReference>
<dbReference type="EMBL" id="AE014073">
    <property type="protein sequence ID" value="AAP18770.1"/>
    <property type="molecule type" value="Genomic_DNA"/>
</dbReference>
<dbReference type="RefSeq" id="NP_709723.2">
    <property type="nucleotide sequence ID" value="NC_004337.2"/>
</dbReference>
<dbReference type="RefSeq" id="WP_005050421.1">
    <property type="nucleotide sequence ID" value="NZ_WPGW01000012.1"/>
</dbReference>
<dbReference type="SMR" id="Q83IU1"/>
<dbReference type="STRING" id="198214.SF3996"/>
<dbReference type="PaxDb" id="198214-SF3996"/>
<dbReference type="DNASU" id="1079963"/>
<dbReference type="GeneID" id="1025482"/>
<dbReference type="KEGG" id="sfl:SF3996"/>
<dbReference type="KEGG" id="sfx:S3751"/>
<dbReference type="PATRIC" id="fig|198214.7.peg.4709"/>
<dbReference type="HOGENOM" id="CLU_077117_0_1_6"/>
<dbReference type="UniPathway" id="UPA00609">
    <property type="reaction ID" value="UER00664"/>
</dbReference>
<dbReference type="Proteomes" id="UP000001006">
    <property type="component" value="Chromosome"/>
</dbReference>
<dbReference type="Proteomes" id="UP000002673">
    <property type="component" value="Chromosome"/>
</dbReference>
<dbReference type="GO" id="GO:0005886">
    <property type="term" value="C:plasma membrane"/>
    <property type="evidence" value="ECO:0007669"/>
    <property type="project" value="UniProtKB-SubCell"/>
</dbReference>
<dbReference type="GO" id="GO:0008715">
    <property type="term" value="F:CDP-diacylglycerol diphosphatase activity"/>
    <property type="evidence" value="ECO:0007669"/>
    <property type="project" value="UniProtKB-UniRule"/>
</dbReference>
<dbReference type="GO" id="GO:0046342">
    <property type="term" value="P:CDP-diacylglycerol catabolic process"/>
    <property type="evidence" value="ECO:0007669"/>
    <property type="project" value="UniProtKB-UniRule"/>
</dbReference>
<dbReference type="GO" id="GO:0008654">
    <property type="term" value="P:phospholipid biosynthetic process"/>
    <property type="evidence" value="ECO:0007669"/>
    <property type="project" value="UniProtKB-KW"/>
</dbReference>
<dbReference type="FunFam" id="3.30.428.30:FF:000001">
    <property type="entry name" value="CDP-diacylglycerol pyrophosphatase"/>
    <property type="match status" value="1"/>
</dbReference>
<dbReference type="Gene3D" id="3.30.428.30">
    <property type="entry name" value="HIT family - CDH-like"/>
    <property type="match status" value="1"/>
</dbReference>
<dbReference type="HAMAP" id="MF_00319">
    <property type="entry name" value="Cdh"/>
    <property type="match status" value="1"/>
</dbReference>
<dbReference type="InterPro" id="IPR003763">
    <property type="entry name" value="CDP-diacylglyc_Pase"/>
</dbReference>
<dbReference type="InterPro" id="IPR015993">
    <property type="entry name" value="CDP-diacylglyc_Pase_proteobac"/>
</dbReference>
<dbReference type="InterPro" id="IPR036265">
    <property type="entry name" value="HIT-like_sf"/>
</dbReference>
<dbReference type="NCBIfam" id="TIGR00672">
    <property type="entry name" value="cdh"/>
    <property type="match status" value="1"/>
</dbReference>
<dbReference type="NCBIfam" id="NF003986">
    <property type="entry name" value="PRK05471.1-5"/>
    <property type="match status" value="1"/>
</dbReference>
<dbReference type="NCBIfam" id="NF003987">
    <property type="entry name" value="PRK05471.1-6"/>
    <property type="match status" value="1"/>
</dbReference>
<dbReference type="Pfam" id="PF02611">
    <property type="entry name" value="CDH"/>
    <property type="match status" value="1"/>
</dbReference>
<dbReference type="PIRSF" id="PIRSF001273">
    <property type="entry name" value="CDH"/>
    <property type="match status" value="1"/>
</dbReference>
<dbReference type="SUPFAM" id="SSF54197">
    <property type="entry name" value="HIT-like"/>
    <property type="match status" value="1"/>
</dbReference>
<accession>Q83IU1</accession>
<accession>Q7UB83</accession>
<feature type="chain" id="PRO_1000019268" description="CDP-diacylglycerol pyrophosphatase">
    <location>
        <begin position="1"/>
        <end position="251"/>
    </location>
</feature>
<feature type="transmembrane region" description="Helical" evidence="1">
    <location>
        <begin position="4"/>
        <end position="24"/>
    </location>
</feature>
<organism>
    <name type="scientific">Shigella flexneri</name>
    <dbReference type="NCBI Taxonomy" id="623"/>
    <lineage>
        <taxon>Bacteria</taxon>
        <taxon>Pseudomonadati</taxon>
        <taxon>Pseudomonadota</taxon>
        <taxon>Gammaproteobacteria</taxon>
        <taxon>Enterobacterales</taxon>
        <taxon>Enterobacteriaceae</taxon>
        <taxon>Shigella</taxon>
    </lineage>
</organism>
<keyword id="KW-0997">Cell inner membrane</keyword>
<keyword id="KW-1003">Cell membrane</keyword>
<keyword id="KW-0378">Hydrolase</keyword>
<keyword id="KW-0444">Lipid biosynthesis</keyword>
<keyword id="KW-0443">Lipid metabolism</keyword>
<keyword id="KW-0472">Membrane</keyword>
<keyword id="KW-0594">Phospholipid biosynthesis</keyword>
<keyword id="KW-1208">Phospholipid metabolism</keyword>
<keyword id="KW-1185">Reference proteome</keyword>
<keyword id="KW-0812">Transmembrane</keyword>
<keyword id="KW-1133">Transmembrane helix</keyword>
<comment type="catalytic activity">
    <reaction evidence="1">
        <text>a CDP-1,2-diacyl-sn-glycerol + H2O = a 1,2-diacyl-sn-glycero-3-phosphate + CMP + 2 H(+)</text>
        <dbReference type="Rhea" id="RHEA:15221"/>
        <dbReference type="ChEBI" id="CHEBI:15377"/>
        <dbReference type="ChEBI" id="CHEBI:15378"/>
        <dbReference type="ChEBI" id="CHEBI:58332"/>
        <dbReference type="ChEBI" id="CHEBI:58608"/>
        <dbReference type="ChEBI" id="CHEBI:60377"/>
        <dbReference type="EC" id="3.6.1.26"/>
    </reaction>
</comment>
<comment type="pathway">
    <text evidence="1">Phospholipid metabolism; CDP-diacylglycerol degradation; phosphatidate from CDP-diacylglycerol: step 1/1.</text>
</comment>
<comment type="subcellular location">
    <subcellularLocation>
        <location evidence="1">Cell inner membrane</location>
        <topology evidence="1">Single-pass membrane protein</topology>
    </subcellularLocation>
</comment>
<comment type="similarity">
    <text evidence="1">Belongs to the Cdh family.</text>
</comment>
<reference key="1">
    <citation type="journal article" date="2002" name="Nucleic Acids Res.">
        <title>Genome sequence of Shigella flexneri 2a: insights into pathogenicity through comparison with genomes of Escherichia coli K12 and O157.</title>
        <authorList>
            <person name="Jin Q."/>
            <person name="Yuan Z."/>
            <person name="Xu J."/>
            <person name="Wang Y."/>
            <person name="Shen Y."/>
            <person name="Lu W."/>
            <person name="Wang J."/>
            <person name="Liu H."/>
            <person name="Yang J."/>
            <person name="Yang F."/>
            <person name="Zhang X."/>
            <person name="Zhang J."/>
            <person name="Yang G."/>
            <person name="Wu H."/>
            <person name="Qu D."/>
            <person name="Dong J."/>
            <person name="Sun L."/>
            <person name="Xue Y."/>
            <person name="Zhao A."/>
            <person name="Gao Y."/>
            <person name="Zhu J."/>
            <person name="Kan B."/>
            <person name="Ding K."/>
            <person name="Chen S."/>
            <person name="Cheng H."/>
            <person name="Yao Z."/>
            <person name="He B."/>
            <person name="Chen R."/>
            <person name="Ma D."/>
            <person name="Qiang B."/>
            <person name="Wen Y."/>
            <person name="Hou Y."/>
            <person name="Yu J."/>
        </authorList>
    </citation>
    <scope>NUCLEOTIDE SEQUENCE [LARGE SCALE GENOMIC DNA]</scope>
    <source>
        <strain>301 / Serotype 2a</strain>
    </source>
</reference>
<reference key="2">
    <citation type="journal article" date="2003" name="Infect. Immun.">
        <title>Complete genome sequence and comparative genomics of Shigella flexneri serotype 2a strain 2457T.</title>
        <authorList>
            <person name="Wei J."/>
            <person name="Goldberg M.B."/>
            <person name="Burland V."/>
            <person name="Venkatesan M.M."/>
            <person name="Deng W."/>
            <person name="Fournier G."/>
            <person name="Mayhew G.F."/>
            <person name="Plunkett G. III"/>
            <person name="Rose D.J."/>
            <person name="Darling A."/>
            <person name="Mau B."/>
            <person name="Perna N.T."/>
            <person name="Payne S.M."/>
            <person name="Runyen-Janecky L.J."/>
            <person name="Zhou S."/>
            <person name="Schwartz D.C."/>
            <person name="Blattner F.R."/>
        </authorList>
    </citation>
    <scope>NUCLEOTIDE SEQUENCE [LARGE SCALE GENOMIC DNA]</scope>
    <source>
        <strain>ATCC 700930 / 2457T / Serotype 2a</strain>
    </source>
</reference>
<sequence length="251" mass="28379">MKKAGLLFLVMIVIAVVAAGIGYWKLTGEESDTLRKIVLEECLPNQQQNQNPSPCAEVKPNAGYVVLKDLNGPLQYLLMPTYRINGTESPLLTDPSTPNFFWLAWQARDFMSKKYGQPVPDRAVSLAINSRTGHTQNHFHIHISCIRPDVREQLDKNLANISSRWLPLPGGLRGHEYLARRVTESELVQRSPFMMLAEEVPEAREHMGSYGLAMVRQSDNSFVLLATQRNLLTLNRASAEEIQDHECEILR</sequence>
<protein>
    <recommendedName>
        <fullName evidence="1">CDP-diacylglycerol pyrophosphatase</fullName>
        <ecNumber evidence="1">3.6.1.26</ecNumber>
    </recommendedName>
    <alternativeName>
        <fullName evidence="1">CDP-diacylglycerol phosphatidylhydrolase</fullName>
    </alternativeName>
    <alternativeName>
        <fullName evidence="1">CDP-diglyceride hydrolase</fullName>
    </alternativeName>
</protein>
<gene>
    <name evidence="1" type="primary">cdh</name>
    <name type="ordered locus">SF3996</name>
    <name type="ordered locus">S3751</name>
</gene>